<sequence length="270" mass="31833">MFNFITFILFAVVCISYCHKSRGRRHFGDEYRINTPACDIVCEGQWKSEFHANFHKIYDTEYFEIPLDTAIVKNRANLKMFCSSTIQKYSCLRNECKIQRTPWSAEKHICVGHFDNFDRNINCLSLTDKYVQRECSNVCNSIKIEISQAEIDRMAEMDFSRQEKSEFVEQNKHCNVIACYQLCHEYIISKVCIDSAVAARSVVKSYYDSYLEREYTELNKDDQDELYSSFCRRVTPGQDENEFTANMTRYNNLTLDRMKNDIRSVFSILD</sequence>
<evidence type="ECO:0000255" key="1"/>
<evidence type="ECO:0000305" key="2"/>
<name>YWV3_CAEEL</name>
<feature type="signal peptide" evidence="1">
    <location>
        <begin position="1"/>
        <end position="23"/>
    </location>
</feature>
<feature type="chain" id="PRO_0000065079" description="Uncharacterized protein B0403.3">
    <location>
        <begin position="24"/>
        <end position="270"/>
    </location>
</feature>
<feature type="glycosylation site" description="N-linked (GlcNAc...) asparagine" evidence="1">
    <location>
        <position position="246"/>
    </location>
</feature>
<feature type="glycosylation site" description="N-linked (GlcNAc...) asparagine" evidence="1">
    <location>
        <position position="252"/>
    </location>
</feature>
<protein>
    <recommendedName>
        <fullName>Uncharacterized protein B0403.3</fullName>
    </recommendedName>
</protein>
<reference key="1">
    <citation type="journal article" date="1998" name="Science">
        <title>Genome sequence of the nematode C. elegans: a platform for investigating biology.</title>
        <authorList>
            <consortium name="The C. elegans sequencing consortium"/>
        </authorList>
    </citation>
    <scope>NUCLEOTIDE SEQUENCE [LARGE SCALE GENOMIC DNA]</scope>
    <source>
        <strain>Bristol N2</strain>
    </source>
</reference>
<keyword id="KW-0325">Glycoprotein</keyword>
<keyword id="KW-1185">Reference proteome</keyword>
<keyword id="KW-0964">Secreted</keyword>
<keyword id="KW-0732">Signal</keyword>
<proteinExistence type="inferred from homology"/>
<organism>
    <name type="scientific">Caenorhabditis elegans</name>
    <dbReference type="NCBI Taxonomy" id="6239"/>
    <lineage>
        <taxon>Eukaryota</taxon>
        <taxon>Metazoa</taxon>
        <taxon>Ecdysozoa</taxon>
        <taxon>Nematoda</taxon>
        <taxon>Chromadorea</taxon>
        <taxon>Rhabditida</taxon>
        <taxon>Rhabditina</taxon>
        <taxon>Rhabditomorpha</taxon>
        <taxon>Rhabditoidea</taxon>
        <taxon>Rhabditidae</taxon>
        <taxon>Peloderinae</taxon>
        <taxon>Caenorhabditis</taxon>
    </lineage>
</organism>
<gene>
    <name type="ORF">B0403.3</name>
</gene>
<accession>Q11077</accession>
<dbReference type="EMBL" id="FO080188">
    <property type="protein sequence ID" value="CCD61842.1"/>
    <property type="molecule type" value="Genomic_DNA"/>
</dbReference>
<dbReference type="PIR" id="T15351">
    <property type="entry name" value="T15351"/>
</dbReference>
<dbReference type="RefSeq" id="NP_001367347.1">
    <property type="nucleotide sequence ID" value="NM_001381018.2"/>
</dbReference>
<dbReference type="RefSeq" id="NP_509189.2">
    <property type="nucleotide sequence ID" value="NM_076788.4"/>
</dbReference>
<dbReference type="FunCoup" id="Q11077">
    <property type="interactions" value="82"/>
</dbReference>
<dbReference type="PaxDb" id="6239-B0403.3"/>
<dbReference type="PeptideAtlas" id="Q11077"/>
<dbReference type="EnsemblMetazoa" id="B0403.3.1">
    <property type="protein sequence ID" value="B0403.3.1"/>
    <property type="gene ID" value="WBGene00015167"/>
</dbReference>
<dbReference type="EnsemblMetazoa" id="B0403.3.2">
    <property type="protein sequence ID" value="B0403.3.2"/>
    <property type="gene ID" value="WBGene00015167"/>
</dbReference>
<dbReference type="GeneID" id="181980"/>
<dbReference type="UCSC" id="B0403.3">
    <property type="organism name" value="c. elegans"/>
</dbReference>
<dbReference type="AGR" id="WB:WBGene00015167"/>
<dbReference type="WormBase" id="B0403.3">
    <property type="protein sequence ID" value="CE38993"/>
    <property type="gene ID" value="WBGene00015167"/>
</dbReference>
<dbReference type="eggNOG" id="ENOG502SZIM">
    <property type="taxonomic scope" value="Eukaryota"/>
</dbReference>
<dbReference type="GeneTree" id="ENSGT00970000196736"/>
<dbReference type="HOGENOM" id="CLU_070167_0_0_1"/>
<dbReference type="InParanoid" id="Q11077"/>
<dbReference type="OMA" id="YSSFCRR"/>
<dbReference type="OrthoDB" id="5813806at2759"/>
<dbReference type="PRO" id="PR:Q11077"/>
<dbReference type="Proteomes" id="UP000001940">
    <property type="component" value="Chromosome X"/>
</dbReference>
<dbReference type="Bgee" id="WBGene00015167">
    <property type="expression patterns" value="Expressed in adult organism and 2 other cell types or tissues"/>
</dbReference>
<dbReference type="GO" id="GO:0005576">
    <property type="term" value="C:extracellular region"/>
    <property type="evidence" value="ECO:0007669"/>
    <property type="project" value="UniProtKB-SubCell"/>
</dbReference>
<dbReference type="PANTHER" id="PTHR36944">
    <property type="entry name" value="PROTEIN CBG02791-RELATED"/>
    <property type="match status" value="1"/>
</dbReference>
<dbReference type="PANTHER" id="PTHR36944:SF3">
    <property type="entry name" value="PROTEIN CBG10961"/>
    <property type="match status" value="1"/>
</dbReference>
<comment type="subcellular location">
    <subcellularLocation>
        <location evidence="2">Secreted</location>
    </subcellularLocation>
</comment>